<gene>
    <name type="ordered locus">Sez_1855</name>
</gene>
<proteinExistence type="inferred from homology"/>
<evidence type="ECO:0000255" key="1">
    <source>
        <dbReference type="HAMAP-Rule" id="MF_00652"/>
    </source>
</evidence>
<organism>
    <name type="scientific">Streptococcus equi subsp. zooepidemicus (strain MGCS10565)</name>
    <dbReference type="NCBI Taxonomy" id="552526"/>
    <lineage>
        <taxon>Bacteria</taxon>
        <taxon>Bacillati</taxon>
        <taxon>Bacillota</taxon>
        <taxon>Bacilli</taxon>
        <taxon>Lactobacillales</taxon>
        <taxon>Streptococcaceae</taxon>
        <taxon>Streptococcus</taxon>
    </lineage>
</organism>
<sequence length="243" mass="28152">MLTFLIPTAKEMKPVPPCYPHQLPQKSLPILEAMAELSLEELARAYSISIEAASKEAKRLKAIAQGQSSAYPAYQLFNGLMYRHLKRDNLSKDQQDYLSKQVYITSSFYGIIPTDEKIAEHRHDFHTKVTINGQSLKHYWRPIYDQFAKDHKQIISLLSSEFKDVFSKEYQRLWISPKFMEERSGQLKTHSTISKKARGAFLTACLENNVQTKEALKQLSFAGFCYNEELSTETNYYYIKKES</sequence>
<name>Y1855_STREM</name>
<protein>
    <recommendedName>
        <fullName evidence="1">UPF0246 protein Sez_1855</fullName>
    </recommendedName>
</protein>
<reference key="1">
    <citation type="journal article" date="2008" name="PLoS ONE">
        <title>Genome sequence of a lancefield group C Streptococcus zooepidemicus strain causing epidemic nephritis: new information about an old disease.</title>
        <authorList>
            <person name="Beres S.B."/>
            <person name="Sesso R."/>
            <person name="Pinto S.W.L."/>
            <person name="Hoe N.P."/>
            <person name="Porcella S.F."/>
            <person name="Deleo F.R."/>
            <person name="Musser J.M."/>
        </authorList>
    </citation>
    <scope>NUCLEOTIDE SEQUENCE [LARGE SCALE GENOMIC DNA]</scope>
    <source>
        <strain>MGCS10565</strain>
    </source>
</reference>
<accession>B4U0H0</accession>
<feature type="chain" id="PRO_1000131147" description="UPF0246 protein Sez_1855">
    <location>
        <begin position="1"/>
        <end position="243"/>
    </location>
</feature>
<comment type="similarity">
    <text evidence="1">Belongs to the UPF0246 family.</text>
</comment>
<dbReference type="EMBL" id="CP001129">
    <property type="protein sequence ID" value="ACG63179.1"/>
    <property type="molecule type" value="Genomic_DNA"/>
</dbReference>
<dbReference type="SMR" id="B4U0H0"/>
<dbReference type="KEGG" id="sez:Sez_1855"/>
<dbReference type="HOGENOM" id="CLU_061989_2_1_9"/>
<dbReference type="Proteomes" id="UP000001873">
    <property type="component" value="Chromosome"/>
</dbReference>
<dbReference type="GO" id="GO:0005829">
    <property type="term" value="C:cytosol"/>
    <property type="evidence" value="ECO:0007669"/>
    <property type="project" value="TreeGrafter"/>
</dbReference>
<dbReference type="GO" id="GO:0033194">
    <property type="term" value="P:response to hydroperoxide"/>
    <property type="evidence" value="ECO:0007669"/>
    <property type="project" value="TreeGrafter"/>
</dbReference>
<dbReference type="HAMAP" id="MF_00652">
    <property type="entry name" value="UPF0246"/>
    <property type="match status" value="1"/>
</dbReference>
<dbReference type="InterPro" id="IPR005583">
    <property type="entry name" value="YaaA"/>
</dbReference>
<dbReference type="NCBIfam" id="NF002543">
    <property type="entry name" value="PRK02101.1-4"/>
    <property type="match status" value="1"/>
</dbReference>
<dbReference type="PANTHER" id="PTHR30283:SF4">
    <property type="entry name" value="PEROXIDE STRESS RESISTANCE PROTEIN YAAA"/>
    <property type="match status" value="1"/>
</dbReference>
<dbReference type="PANTHER" id="PTHR30283">
    <property type="entry name" value="PEROXIDE STRESS RESPONSE PROTEIN YAAA"/>
    <property type="match status" value="1"/>
</dbReference>
<dbReference type="Pfam" id="PF03883">
    <property type="entry name" value="H2O2_YaaD"/>
    <property type="match status" value="1"/>
</dbReference>